<reference key="1">
    <citation type="submission" date="2008-02" db="EMBL/GenBank/DDBJ databases">
        <title>Complete sequence of Escherichia coli C str. ATCC 8739.</title>
        <authorList>
            <person name="Copeland A."/>
            <person name="Lucas S."/>
            <person name="Lapidus A."/>
            <person name="Glavina del Rio T."/>
            <person name="Dalin E."/>
            <person name="Tice H."/>
            <person name="Bruce D."/>
            <person name="Goodwin L."/>
            <person name="Pitluck S."/>
            <person name="Kiss H."/>
            <person name="Brettin T."/>
            <person name="Detter J.C."/>
            <person name="Han C."/>
            <person name="Kuske C.R."/>
            <person name="Schmutz J."/>
            <person name="Larimer F."/>
            <person name="Land M."/>
            <person name="Hauser L."/>
            <person name="Kyrpides N."/>
            <person name="Mikhailova N."/>
            <person name="Ingram L."/>
            <person name="Richardson P."/>
        </authorList>
    </citation>
    <scope>NUCLEOTIDE SEQUENCE [LARGE SCALE GENOMIC DNA]</scope>
    <source>
        <strain>ATCC 8739 / DSM 1576 / NBRC 3972 / NCIMB 8545 / WDCM 00012 / Crooks</strain>
    </source>
</reference>
<comment type="function">
    <text evidence="1">Catalyzes the reversible transfer of the CoA moiety from gamma-butyrobetainyl-CoA to L-carnitine to generate L-carnitinyl-CoA and gamma-butyrobetaine. Is also able to catalyze the reversible transfer of the CoA moiety from gamma-butyrobetainyl-CoA or L-carnitinyl-CoA to crotonobetaine to generate crotonobetainyl-CoA.</text>
</comment>
<comment type="catalytic activity">
    <reaction evidence="1">
        <text>crotonobetainyl-CoA + (R)-carnitine = crotonobetaine + (R)-carnitinyl-CoA</text>
        <dbReference type="Rhea" id="RHEA:28526"/>
        <dbReference type="ChEBI" id="CHEBI:16347"/>
        <dbReference type="ChEBI" id="CHEBI:17237"/>
        <dbReference type="ChEBI" id="CHEBI:60932"/>
        <dbReference type="ChEBI" id="CHEBI:60933"/>
        <dbReference type="EC" id="2.8.3.21"/>
    </reaction>
</comment>
<comment type="catalytic activity">
    <reaction evidence="1">
        <text>4-(trimethylamino)butanoyl-CoA + (R)-carnitine = (R)-carnitinyl-CoA + 4-(trimethylamino)butanoate</text>
        <dbReference type="Rhea" id="RHEA:28418"/>
        <dbReference type="ChEBI" id="CHEBI:16244"/>
        <dbReference type="ChEBI" id="CHEBI:16347"/>
        <dbReference type="ChEBI" id="CHEBI:60932"/>
        <dbReference type="ChEBI" id="CHEBI:61513"/>
        <dbReference type="EC" id="2.8.3.21"/>
    </reaction>
</comment>
<comment type="pathway">
    <text evidence="1">Amine and polyamine metabolism; carnitine metabolism.</text>
</comment>
<comment type="subunit">
    <text evidence="1">Homodimer.</text>
</comment>
<comment type="subcellular location">
    <subcellularLocation>
        <location evidence="1">Cytoplasm</location>
    </subcellularLocation>
</comment>
<comment type="similarity">
    <text evidence="1">Belongs to the CoA-transferase III family. CaiB subfamily.</text>
</comment>
<protein>
    <recommendedName>
        <fullName evidence="1">L-carnitine CoA-transferase</fullName>
        <ecNumber evidence="1">2.8.3.21</ecNumber>
    </recommendedName>
    <alternativeName>
        <fullName evidence="1">Crotonobetainyl-CoA:carnitine CoA-transferase</fullName>
    </alternativeName>
</protein>
<organism>
    <name type="scientific">Escherichia coli (strain ATCC 8739 / DSM 1576 / NBRC 3972 / NCIMB 8545 / WDCM 00012 / Crooks)</name>
    <dbReference type="NCBI Taxonomy" id="481805"/>
    <lineage>
        <taxon>Bacteria</taxon>
        <taxon>Pseudomonadati</taxon>
        <taxon>Pseudomonadota</taxon>
        <taxon>Gammaproteobacteria</taxon>
        <taxon>Enterobacterales</taxon>
        <taxon>Enterobacteriaceae</taxon>
        <taxon>Escherichia</taxon>
    </lineage>
</organism>
<feature type="chain" id="PRO_1000084424" description="L-carnitine CoA-transferase">
    <location>
        <begin position="1"/>
        <end position="405"/>
    </location>
</feature>
<feature type="active site" description="Nucleophile" evidence="1">
    <location>
        <position position="169"/>
    </location>
</feature>
<feature type="binding site" evidence="1">
    <location>
        <position position="97"/>
    </location>
    <ligand>
        <name>CoA</name>
        <dbReference type="ChEBI" id="CHEBI:57287"/>
    </ligand>
</feature>
<feature type="binding site" evidence="1">
    <location>
        <position position="104"/>
    </location>
    <ligand>
        <name>CoA</name>
        <dbReference type="ChEBI" id="CHEBI:57287"/>
    </ligand>
</feature>
<proteinExistence type="inferred from homology"/>
<accession>B1IRD8</accession>
<name>CAIB_ECOLC</name>
<dbReference type="EC" id="2.8.3.21" evidence="1"/>
<dbReference type="EMBL" id="CP000946">
    <property type="protein sequence ID" value="ACA79231.1"/>
    <property type="molecule type" value="Genomic_DNA"/>
</dbReference>
<dbReference type="RefSeq" id="WP_000349936.1">
    <property type="nucleotide sequence ID" value="NZ_MTFT01000035.1"/>
</dbReference>
<dbReference type="SMR" id="B1IRD8"/>
<dbReference type="KEGG" id="ecl:EcolC_3617"/>
<dbReference type="HOGENOM" id="CLU_033975_2_0_6"/>
<dbReference type="UniPathway" id="UPA00117"/>
<dbReference type="GO" id="GO:0005737">
    <property type="term" value="C:cytoplasm"/>
    <property type="evidence" value="ECO:0007669"/>
    <property type="project" value="UniProtKB-SubCell"/>
</dbReference>
<dbReference type="GO" id="GO:0008735">
    <property type="term" value="F:L-carnitine CoA-transferase activity"/>
    <property type="evidence" value="ECO:0007669"/>
    <property type="project" value="RHEA"/>
</dbReference>
<dbReference type="GO" id="GO:0009437">
    <property type="term" value="P:carnitine metabolic process"/>
    <property type="evidence" value="ECO:0007669"/>
    <property type="project" value="UniProtKB-UniRule"/>
</dbReference>
<dbReference type="FunFam" id="3.30.1540.10:FF:000001">
    <property type="entry name" value="L-carnitine CoA-transferase"/>
    <property type="match status" value="1"/>
</dbReference>
<dbReference type="Gene3D" id="3.40.50.10540">
    <property type="entry name" value="Crotonobetainyl-coa:carnitine coa-transferase, domain 1"/>
    <property type="match status" value="1"/>
</dbReference>
<dbReference type="Gene3D" id="3.30.1540.10">
    <property type="entry name" value="formyl-coa transferase, domain 3"/>
    <property type="match status" value="1"/>
</dbReference>
<dbReference type="HAMAP" id="MF_01050">
    <property type="entry name" value="CaiB"/>
    <property type="match status" value="1"/>
</dbReference>
<dbReference type="InterPro" id="IPR050509">
    <property type="entry name" value="CoA-transferase_III"/>
</dbReference>
<dbReference type="InterPro" id="IPR023452">
    <property type="entry name" value="CoA-Trfase_CaiB"/>
</dbReference>
<dbReference type="InterPro" id="IPR003673">
    <property type="entry name" value="CoA-Trfase_fam_III"/>
</dbReference>
<dbReference type="InterPro" id="IPR044855">
    <property type="entry name" value="CoA-Trfase_III_dom3_sf"/>
</dbReference>
<dbReference type="InterPro" id="IPR023606">
    <property type="entry name" value="CoA-Trfase_III_dom_1_sf"/>
</dbReference>
<dbReference type="NCBIfam" id="NF002914">
    <property type="entry name" value="PRK03525.1"/>
    <property type="match status" value="1"/>
</dbReference>
<dbReference type="PANTHER" id="PTHR48228:SF6">
    <property type="entry name" value="L-CARNITINE COA-TRANSFERASE"/>
    <property type="match status" value="1"/>
</dbReference>
<dbReference type="PANTHER" id="PTHR48228">
    <property type="entry name" value="SUCCINYL-COA--D-CITRAMALATE COA-TRANSFERASE"/>
    <property type="match status" value="1"/>
</dbReference>
<dbReference type="Pfam" id="PF02515">
    <property type="entry name" value="CoA_transf_3"/>
    <property type="match status" value="1"/>
</dbReference>
<dbReference type="SUPFAM" id="SSF89796">
    <property type="entry name" value="CoA-transferase family III (CaiB/BaiF)"/>
    <property type="match status" value="1"/>
</dbReference>
<sequence length="405" mass="45127">MDHLPMPKFGPLAGLRVVFSGIEIAGPFAGQMFAEWGAEVIWIENVAWADTIRVQPNYPQLSRRNLHALSLNIFKDEGREAFLKLMETTDIFIEASKGPAFARRGITDEVLWQHNPKLVIAHLSGFGQYGTEEYTNLPAYNTIAQAFSGYLIQNGDVDQPMPAFPYTADYFSGLTATTAALAALHKVRETGKGESIDIAMYEVMLRMGQYFMMDYFNGGEMCPRMSKGKDPYYAGCGLYKCADGYIVMELVGITQIEECFKDIGLAHLLGTPEIPEGTQLIHRIECPYGPLVEEKLDAWLATHTIAEVKERFAELNIACAKVLTVPELESNPQYVARESITQWQTMDGRTCKGPNIMPKFKNNPGQIWRGMPSHGMDTAAILKNIGYSENDIQELVSKGLAKVED</sequence>
<gene>
    <name evidence="1" type="primary">caiB</name>
    <name type="ordered locus">EcolC_3617</name>
</gene>
<evidence type="ECO:0000255" key="1">
    <source>
        <dbReference type="HAMAP-Rule" id="MF_01050"/>
    </source>
</evidence>
<keyword id="KW-0963">Cytoplasm</keyword>
<keyword id="KW-0808">Transferase</keyword>